<feature type="chain" id="PRO_1000130730" description="Nucleotide-binding protein BCAH820_5240">
    <location>
        <begin position="1"/>
        <end position="293"/>
    </location>
</feature>
<feature type="binding site" evidence="1">
    <location>
        <begin position="14"/>
        <end position="21"/>
    </location>
    <ligand>
        <name>ATP</name>
        <dbReference type="ChEBI" id="CHEBI:30616"/>
    </ligand>
</feature>
<feature type="binding site" evidence="1">
    <location>
        <begin position="65"/>
        <end position="68"/>
    </location>
    <ligand>
        <name>GTP</name>
        <dbReference type="ChEBI" id="CHEBI:37565"/>
    </ligand>
</feature>
<name>Y5240_BACC0</name>
<sequence length="293" mass="33447">MTENNDIKMVIITGMSGAGKTVALQSFEDLGYFCVDNLPPMLLPKFIELMADSKGKMNKVALGVDLRGREFFEHLWGALDDLSERTWIIPHILFLDAKDSTLVTRYKETRRSHPLAPTGLPLKGIEIERSLLTDMKARANIVLDTSDLKPKELREKIVHLFSTETEQAFRVNVMSFGFKYGIPIDADLVFDVRFLPNPYYIPHMKPLTGLDEEVSSYVLKFNETHKFLEKLTDLITFMLPHYKREGKSQLVIAIGCTGGQHRSVTLTEYLGKHLKPEYSVHVSHRDVEKRKGH</sequence>
<protein>
    <recommendedName>
        <fullName evidence="1">Nucleotide-binding protein BCAH820_5240</fullName>
    </recommendedName>
</protein>
<organism>
    <name type="scientific">Bacillus cereus (strain AH820)</name>
    <dbReference type="NCBI Taxonomy" id="405535"/>
    <lineage>
        <taxon>Bacteria</taxon>
        <taxon>Bacillati</taxon>
        <taxon>Bacillota</taxon>
        <taxon>Bacilli</taxon>
        <taxon>Bacillales</taxon>
        <taxon>Bacillaceae</taxon>
        <taxon>Bacillus</taxon>
        <taxon>Bacillus cereus group</taxon>
    </lineage>
</organism>
<reference key="1">
    <citation type="submission" date="2008-10" db="EMBL/GenBank/DDBJ databases">
        <title>Genome sequence of Bacillus cereus AH820.</title>
        <authorList>
            <person name="Dodson R.J."/>
            <person name="Durkin A.S."/>
            <person name="Rosovitz M.J."/>
            <person name="Rasko D.A."/>
            <person name="Hoffmaster A."/>
            <person name="Ravel J."/>
            <person name="Sutton G."/>
        </authorList>
    </citation>
    <scope>NUCLEOTIDE SEQUENCE [LARGE SCALE GENOMIC DNA]</scope>
    <source>
        <strain>AH820</strain>
    </source>
</reference>
<dbReference type="EMBL" id="CP001283">
    <property type="protein sequence ID" value="ACK92315.1"/>
    <property type="molecule type" value="Genomic_DNA"/>
</dbReference>
<dbReference type="SMR" id="B7JFI2"/>
<dbReference type="KEGG" id="bcu:BCAH820_5240"/>
<dbReference type="HOGENOM" id="CLU_059558_0_0_9"/>
<dbReference type="Proteomes" id="UP000001363">
    <property type="component" value="Chromosome"/>
</dbReference>
<dbReference type="GO" id="GO:0005524">
    <property type="term" value="F:ATP binding"/>
    <property type="evidence" value="ECO:0007669"/>
    <property type="project" value="UniProtKB-UniRule"/>
</dbReference>
<dbReference type="GO" id="GO:0005525">
    <property type="term" value="F:GTP binding"/>
    <property type="evidence" value="ECO:0007669"/>
    <property type="project" value="UniProtKB-UniRule"/>
</dbReference>
<dbReference type="Gene3D" id="3.40.50.300">
    <property type="entry name" value="P-loop containing nucleotide triphosphate hydrolases"/>
    <property type="match status" value="1"/>
</dbReference>
<dbReference type="HAMAP" id="MF_00636">
    <property type="entry name" value="RapZ_like"/>
    <property type="match status" value="1"/>
</dbReference>
<dbReference type="InterPro" id="IPR027417">
    <property type="entry name" value="P-loop_NTPase"/>
</dbReference>
<dbReference type="InterPro" id="IPR005337">
    <property type="entry name" value="RapZ-like"/>
</dbReference>
<dbReference type="InterPro" id="IPR053930">
    <property type="entry name" value="RapZ-like_N"/>
</dbReference>
<dbReference type="InterPro" id="IPR053931">
    <property type="entry name" value="RapZ_C"/>
</dbReference>
<dbReference type="NCBIfam" id="NF003828">
    <property type="entry name" value="PRK05416.1"/>
    <property type="match status" value="1"/>
</dbReference>
<dbReference type="PANTHER" id="PTHR30448">
    <property type="entry name" value="RNASE ADAPTER PROTEIN RAPZ"/>
    <property type="match status" value="1"/>
</dbReference>
<dbReference type="PANTHER" id="PTHR30448:SF0">
    <property type="entry name" value="RNASE ADAPTER PROTEIN RAPZ"/>
    <property type="match status" value="1"/>
</dbReference>
<dbReference type="Pfam" id="PF22740">
    <property type="entry name" value="PapZ_C"/>
    <property type="match status" value="1"/>
</dbReference>
<dbReference type="Pfam" id="PF03668">
    <property type="entry name" value="RapZ-like_N"/>
    <property type="match status" value="1"/>
</dbReference>
<dbReference type="PIRSF" id="PIRSF005052">
    <property type="entry name" value="P-loopkin"/>
    <property type="match status" value="1"/>
</dbReference>
<dbReference type="SUPFAM" id="SSF52540">
    <property type="entry name" value="P-loop containing nucleoside triphosphate hydrolases"/>
    <property type="match status" value="1"/>
</dbReference>
<gene>
    <name type="ordered locus">BCAH820_5240</name>
</gene>
<evidence type="ECO:0000255" key="1">
    <source>
        <dbReference type="HAMAP-Rule" id="MF_00636"/>
    </source>
</evidence>
<proteinExistence type="inferred from homology"/>
<keyword id="KW-0067">ATP-binding</keyword>
<keyword id="KW-0342">GTP-binding</keyword>
<keyword id="KW-0547">Nucleotide-binding</keyword>
<comment type="function">
    <text evidence="1">Displays ATPase and GTPase activities.</text>
</comment>
<comment type="similarity">
    <text evidence="1">Belongs to the RapZ-like family.</text>
</comment>
<accession>B7JFI2</accession>